<organism>
    <name type="scientific">Macaca fascicularis</name>
    <name type="common">Crab-eating macaque</name>
    <name type="synonym">Cynomolgus monkey</name>
    <dbReference type="NCBI Taxonomy" id="9541"/>
    <lineage>
        <taxon>Eukaryota</taxon>
        <taxon>Metazoa</taxon>
        <taxon>Chordata</taxon>
        <taxon>Craniata</taxon>
        <taxon>Vertebrata</taxon>
        <taxon>Euteleostomi</taxon>
        <taxon>Mammalia</taxon>
        <taxon>Eutheria</taxon>
        <taxon>Euarchontoglires</taxon>
        <taxon>Primates</taxon>
        <taxon>Haplorrhini</taxon>
        <taxon>Catarrhini</taxon>
        <taxon>Cercopithecidae</taxon>
        <taxon>Cercopithecinae</taxon>
        <taxon>Macaca</taxon>
    </lineage>
</organism>
<keyword id="KW-0325">Glycoprotein</keyword>
<keyword id="KW-0472">Membrane</keyword>
<keyword id="KW-1185">Reference proteome</keyword>
<keyword id="KW-0812">Transmembrane</keyword>
<keyword id="KW-1133">Transmembrane helix</keyword>
<keyword id="KW-0813">Transport</keyword>
<dbReference type="EMBL" id="AB168581">
    <property type="protein sequence ID" value="BAE00695.1"/>
    <property type="molecule type" value="mRNA"/>
</dbReference>
<dbReference type="SMR" id="Q4R877"/>
<dbReference type="STRING" id="9541.ENSMFAP00000033397"/>
<dbReference type="GlyCosmos" id="Q4R877">
    <property type="glycosylation" value="2 sites, No reported glycans"/>
</dbReference>
<dbReference type="eggNOG" id="KOG3810">
    <property type="taxonomic scope" value="Eukaryota"/>
</dbReference>
<dbReference type="Proteomes" id="UP000233100">
    <property type="component" value="Unplaced"/>
</dbReference>
<dbReference type="GO" id="GO:0005886">
    <property type="term" value="C:plasma membrane"/>
    <property type="evidence" value="ECO:0007669"/>
    <property type="project" value="TreeGrafter"/>
</dbReference>
<dbReference type="GO" id="GO:0015234">
    <property type="term" value="F:thiamine transmembrane transporter activity"/>
    <property type="evidence" value="ECO:0007669"/>
    <property type="project" value="InterPro"/>
</dbReference>
<dbReference type="GO" id="GO:0031923">
    <property type="term" value="P:pyridoxine transport"/>
    <property type="evidence" value="ECO:0000250"/>
    <property type="project" value="UniProtKB"/>
</dbReference>
<dbReference type="GO" id="GO:0015888">
    <property type="term" value="P:thiamine transport"/>
    <property type="evidence" value="ECO:0000250"/>
    <property type="project" value="UniProtKB"/>
</dbReference>
<dbReference type="Gene3D" id="1.20.1250.20">
    <property type="entry name" value="MFS general substrate transporter like domains"/>
    <property type="match status" value="1"/>
</dbReference>
<dbReference type="InterPro" id="IPR002666">
    <property type="entry name" value="Folate_carrier"/>
</dbReference>
<dbReference type="InterPro" id="IPR036259">
    <property type="entry name" value="MFS_trans_sf"/>
</dbReference>
<dbReference type="InterPro" id="IPR028337">
    <property type="entry name" value="ThTr-2"/>
</dbReference>
<dbReference type="NCBIfam" id="TIGR00806">
    <property type="entry name" value="rfc"/>
    <property type="match status" value="1"/>
</dbReference>
<dbReference type="PANTHER" id="PTHR10686">
    <property type="entry name" value="FOLATE TRANSPORTER"/>
    <property type="match status" value="1"/>
</dbReference>
<dbReference type="PANTHER" id="PTHR10686:SF37">
    <property type="entry name" value="THIAMINE TRANSPORTER 2"/>
    <property type="match status" value="1"/>
</dbReference>
<dbReference type="Pfam" id="PF01770">
    <property type="entry name" value="Folate_carrier"/>
    <property type="match status" value="1"/>
</dbReference>
<dbReference type="PIRSF" id="PIRSF028739">
    <property type="entry name" value="Folate_carrier"/>
    <property type="match status" value="1"/>
</dbReference>
<dbReference type="PIRSF" id="PIRSF500795">
    <property type="entry name" value="Thiamine_transporter_2"/>
    <property type="match status" value="1"/>
</dbReference>
<dbReference type="SUPFAM" id="SSF103473">
    <property type="entry name" value="MFS general substrate transporter"/>
    <property type="match status" value="1"/>
</dbReference>
<proteinExistence type="evidence at transcript level"/>
<name>S19A3_MACFA</name>
<sequence length="496" mass="55870">MDCYRTSPSNSWIYTTVILCIFGFFSMMRPSEPFLIPYLSGPDKNLTSEEMTNEIFPVWTYSYLVLLLPVLVLTDYVRYKPVIILQGISFIITWLLLLFGQGVKTMQVVEFFYGMVTATEVAYYAYIYSVVSPEHYQRVSGYCRSVTLVAYTAGSVLAQLLVSLANLSYFYLNVISLASVSVAFLFSLFLPMPKKSMFFHAKPSREIKKSSSVNPVLEETHEGEAPDCEKQKPTSEIPSTSGKLHKGQLNSLKPRNVTVEVFVQWFQDLKECYSSKRLFYWSLWWAFATAGFNQILNYVQILWDYKSPSQDSSIYNGAVEATATFGGAVAAFAVGYVKVNWDLLGELALAVFSVVNAGSLFLMHYTANIWACYAGYLIFKSSYMLLITIAVFQIAVNLSVERYALVFGINTFIALVIQTIITVIVVDQRGLNLPISIQFLVYGSYFAVIAGIFLMRSMYIIYSTKSQKDVQSPAPSENPDMSHPEEESNAIMSTKL</sequence>
<feature type="chain" id="PRO_0000232657" description="Thiamine transporter 2">
    <location>
        <begin position="1"/>
        <end position="496"/>
    </location>
</feature>
<feature type="topological domain" description="Cytoplasmic" evidence="2">
    <location>
        <begin position="1"/>
        <end position="7"/>
    </location>
</feature>
<feature type="transmembrane region" description="Helical" evidence="2">
    <location>
        <begin position="8"/>
        <end position="28"/>
    </location>
</feature>
<feature type="topological domain" description="Extracellular" evidence="2">
    <location>
        <begin position="29"/>
        <end position="53"/>
    </location>
</feature>
<feature type="transmembrane region" description="Helical" evidence="2">
    <location>
        <begin position="54"/>
        <end position="74"/>
    </location>
</feature>
<feature type="topological domain" description="Cytoplasmic" evidence="2">
    <location>
        <begin position="75"/>
        <end position="81"/>
    </location>
</feature>
<feature type="transmembrane region" description="Helical" evidence="2">
    <location>
        <begin position="82"/>
        <end position="102"/>
    </location>
</feature>
<feature type="topological domain" description="Extracellular" evidence="2">
    <location>
        <begin position="103"/>
        <end position="110"/>
    </location>
</feature>
<feature type="transmembrane region" description="Helical" evidence="2">
    <location>
        <begin position="111"/>
        <end position="131"/>
    </location>
</feature>
<feature type="topological domain" description="Cytoplasmic" evidence="2">
    <location>
        <begin position="132"/>
        <end position="144"/>
    </location>
</feature>
<feature type="transmembrane region" description="Helical" evidence="2">
    <location>
        <begin position="145"/>
        <end position="165"/>
    </location>
</feature>
<feature type="topological domain" description="Extracellular" evidence="2">
    <location>
        <begin position="166"/>
        <end position="169"/>
    </location>
</feature>
<feature type="transmembrane region" description="Helical" evidence="2">
    <location>
        <begin position="170"/>
        <end position="190"/>
    </location>
</feature>
<feature type="topological domain" description="Cytoplasmic" evidence="2">
    <location>
        <begin position="191"/>
        <end position="282"/>
    </location>
</feature>
<feature type="transmembrane region" description="Helical" evidence="2">
    <location>
        <begin position="283"/>
        <end position="303"/>
    </location>
</feature>
<feature type="topological domain" description="Extracellular" evidence="2">
    <location>
        <begin position="304"/>
        <end position="316"/>
    </location>
</feature>
<feature type="transmembrane region" description="Helical" evidence="2">
    <location>
        <begin position="317"/>
        <end position="337"/>
    </location>
</feature>
<feature type="topological domain" description="Cytoplasmic" evidence="2">
    <location>
        <begin position="338"/>
        <end position="342"/>
    </location>
</feature>
<feature type="transmembrane region" description="Helical" evidence="2">
    <location>
        <begin position="343"/>
        <end position="363"/>
    </location>
</feature>
<feature type="topological domain" description="Extracellular" evidence="2">
    <location>
        <begin position="364"/>
        <end position="375"/>
    </location>
</feature>
<feature type="transmembrane region" description="Helical" evidence="2">
    <location>
        <begin position="376"/>
        <end position="396"/>
    </location>
</feature>
<feature type="topological domain" description="Cytoplasmic" evidence="2">
    <location>
        <begin position="397"/>
        <end position="405"/>
    </location>
</feature>
<feature type="transmembrane region" description="Helical" evidence="2">
    <location>
        <begin position="406"/>
        <end position="426"/>
    </location>
</feature>
<feature type="topological domain" description="Extracellular" evidence="2">
    <location>
        <begin position="427"/>
        <end position="434"/>
    </location>
</feature>
<feature type="transmembrane region" description="Helical" evidence="2">
    <location>
        <begin position="435"/>
        <end position="455"/>
    </location>
</feature>
<feature type="topological domain" description="Cytoplasmic" evidence="2">
    <location>
        <begin position="456"/>
        <end position="496"/>
    </location>
</feature>
<feature type="region of interest" description="Disordered" evidence="3">
    <location>
        <begin position="210"/>
        <end position="248"/>
    </location>
</feature>
<feature type="region of interest" description="Disordered" evidence="3">
    <location>
        <begin position="469"/>
        <end position="496"/>
    </location>
</feature>
<feature type="compositionally biased region" description="Basic and acidic residues" evidence="3">
    <location>
        <begin position="218"/>
        <end position="233"/>
    </location>
</feature>
<feature type="compositionally biased region" description="Polar residues" evidence="3">
    <location>
        <begin position="234"/>
        <end position="248"/>
    </location>
</feature>
<feature type="site" description="Essential for pyridoxine transport" evidence="1">
    <location>
        <position position="86"/>
    </location>
</feature>
<feature type="site" description="Essential for pyridoxine transport" evidence="1">
    <location>
        <position position="87"/>
    </location>
</feature>
<feature type="site" description="Essential for pyridoxine transport" evidence="1">
    <location>
        <position position="91"/>
    </location>
</feature>
<feature type="site" description="Essential for pyridoxine transport" evidence="1">
    <location>
        <position position="93"/>
    </location>
</feature>
<feature type="site" description="Essential for pyridoxine transport" evidence="1">
    <location>
        <position position="94"/>
    </location>
</feature>
<feature type="site" description="Essential for pyridoxine transport" evidence="1">
    <location>
        <position position="168"/>
    </location>
</feature>
<feature type="site" description="Essential for pyridoxine transport" evidence="1">
    <location>
        <position position="173"/>
    </location>
</feature>
<feature type="glycosylation site" description="N-linked (GlcNAc...) asparagine" evidence="2">
    <location>
        <position position="45"/>
    </location>
</feature>
<feature type="glycosylation site" description="N-linked (GlcNAc...) asparagine" evidence="2">
    <location>
        <position position="166"/>
    </location>
</feature>
<reference key="1">
    <citation type="submission" date="2005-06" db="EMBL/GenBank/DDBJ databases">
        <title>DNA sequences of macaque genes expressed in brain or testis and its evolutionary implications.</title>
        <authorList>
            <consortium name="International consortium for macaque cDNA sequencing and analysis"/>
        </authorList>
    </citation>
    <scope>NUCLEOTIDE SEQUENCE [LARGE SCALE MRNA]</scope>
    <source>
        <tissue>Testis</tissue>
    </source>
</reference>
<gene>
    <name type="primary">SLC19A3</name>
    <name type="ORF">QtsA-13204</name>
</gene>
<protein>
    <recommendedName>
        <fullName>Thiamine transporter 2</fullName>
        <shortName>ThTr-2</shortName>
        <shortName>ThTr2</shortName>
    </recommendedName>
    <alternativeName>
        <fullName>Solute carrier family 19 member 3</fullName>
    </alternativeName>
</protein>
<evidence type="ECO:0000250" key="1">
    <source>
        <dbReference type="UniProtKB" id="Q9BZV2"/>
    </source>
</evidence>
<evidence type="ECO:0000255" key="2"/>
<evidence type="ECO:0000256" key="3">
    <source>
        <dbReference type="SAM" id="MobiDB-lite"/>
    </source>
</evidence>
<evidence type="ECO:0000305" key="4"/>
<accession>Q4R877</accession>
<comment type="function">
    <text evidence="1">Mediates high affinity thiamine uptake, probably via a proton anti-port mechanism. Has no folate transport activity. Mediates H(+)-dependent pyridoxine transport (By similarity).</text>
</comment>
<comment type="catalytic activity">
    <reaction evidence="1">
        <text>thiamine(out) + H(+)(in) = thiamine(in) + H(+)(out)</text>
        <dbReference type="Rhea" id="RHEA:71271"/>
        <dbReference type="ChEBI" id="CHEBI:15378"/>
        <dbReference type="ChEBI" id="CHEBI:18385"/>
    </reaction>
</comment>
<comment type="catalytic activity">
    <reaction evidence="1">
        <text>pyridoxine(out) + n H(+)(out) = pyridoxine(in) + n H(+)(in)</text>
        <dbReference type="Rhea" id="RHEA:76203"/>
        <dbReference type="ChEBI" id="CHEBI:15378"/>
        <dbReference type="ChEBI" id="CHEBI:16709"/>
    </reaction>
</comment>
<comment type="subcellular location">
    <subcellularLocation>
        <location evidence="4">Membrane</location>
        <topology evidence="4">Multi-pass membrane protein</topology>
    </subcellularLocation>
</comment>
<comment type="similarity">
    <text evidence="4">Belongs to the reduced folate carrier (RFC) transporter (TC 2.A.48) family.</text>
</comment>